<protein>
    <recommendedName>
        <fullName evidence="5">Cilia- and flagella-associated protein 53</fullName>
    </recommendedName>
</protein>
<organism>
    <name type="scientific">Chlamydomonas reinhardtii</name>
    <name type="common">Chlamydomonas smithii</name>
    <dbReference type="NCBI Taxonomy" id="3055"/>
    <lineage>
        <taxon>Eukaryota</taxon>
        <taxon>Viridiplantae</taxon>
        <taxon>Chlorophyta</taxon>
        <taxon>core chlorophytes</taxon>
        <taxon>Chlorophyceae</taxon>
        <taxon>CS clade</taxon>
        <taxon>Chlamydomonadales</taxon>
        <taxon>Chlamydomonadaceae</taxon>
        <taxon>Chlamydomonas</taxon>
    </lineage>
</organism>
<comment type="function">
    <text evidence="1">May play a role in filopodium movement.</text>
</comment>
<comment type="subcellular location">
    <subcellularLocation>
        <location evidence="4">Cell projection</location>
        <location evidence="4">Cilium</location>
        <location evidence="4">Flagellum</location>
    </subcellularLocation>
</comment>
<comment type="similarity">
    <text evidence="5">Belongs to the CFAP53 family.</text>
</comment>
<evidence type="ECO:0000250" key="1">
    <source>
        <dbReference type="UniProtKB" id="Q96M91"/>
    </source>
</evidence>
<evidence type="ECO:0000255" key="2"/>
<evidence type="ECO:0000256" key="3">
    <source>
        <dbReference type="SAM" id="MobiDB-lite"/>
    </source>
</evidence>
<evidence type="ECO:0000269" key="4">
    <source>
    </source>
</evidence>
<evidence type="ECO:0000305" key="5"/>
<evidence type="ECO:0000312" key="6">
    <source>
        <dbReference type="EMBL" id="EDP04486.1"/>
    </source>
</evidence>
<reference key="1">
    <citation type="journal article" date="2007" name="Science">
        <title>The Chlamydomonas genome reveals the evolution of key animal and plant functions.</title>
        <authorList>
            <person name="Merchant S.S."/>
            <person name="Prochnik S.E."/>
            <person name="Vallon O."/>
            <person name="Harris E.H."/>
            <person name="Karpowicz S.J."/>
            <person name="Witman G.B."/>
            <person name="Terry A."/>
            <person name="Salamov A."/>
            <person name="Fritz-Laylin L.K."/>
            <person name="Marechal-Drouard L."/>
            <person name="Marshall W.F."/>
            <person name="Qu L.H."/>
            <person name="Nelson D.R."/>
            <person name="Sanderfoot A.A."/>
            <person name="Spalding M.H."/>
            <person name="Kapitonov V.V."/>
            <person name="Ren Q."/>
            <person name="Ferris P."/>
            <person name="Lindquist E."/>
            <person name="Shapiro H."/>
            <person name="Lucas S.M."/>
            <person name="Grimwood J."/>
            <person name="Schmutz J."/>
            <person name="Cardol P."/>
            <person name="Cerutti H."/>
            <person name="Chanfreau G."/>
            <person name="Chen C.L."/>
            <person name="Cognat V."/>
            <person name="Croft M.T."/>
            <person name="Dent R."/>
            <person name="Dutcher S."/>
            <person name="Fernandez E."/>
            <person name="Fukuzawa H."/>
            <person name="Gonzalez-Ballester D."/>
            <person name="Gonzalez-Halphen D."/>
            <person name="Hallmann A."/>
            <person name="Hanikenne M."/>
            <person name="Hippler M."/>
            <person name="Inwood W."/>
            <person name="Jabbari K."/>
            <person name="Kalanon M."/>
            <person name="Kuras R."/>
            <person name="Lefebvre P.A."/>
            <person name="Lemaire S.D."/>
            <person name="Lobanov A.V."/>
            <person name="Lohr M."/>
            <person name="Manuell A."/>
            <person name="Meier I."/>
            <person name="Mets L."/>
            <person name="Mittag M."/>
            <person name="Mittelmeier T."/>
            <person name="Moroney J.V."/>
            <person name="Moseley J."/>
            <person name="Napoli C."/>
            <person name="Nedelcu A.M."/>
            <person name="Niyogi K."/>
            <person name="Novoselov S.V."/>
            <person name="Paulsen I.T."/>
            <person name="Pazour G.J."/>
            <person name="Purton S."/>
            <person name="Ral J.P."/>
            <person name="Riano-Pachon D.M."/>
            <person name="Riekhof W."/>
            <person name="Rymarquis L."/>
            <person name="Schroda M."/>
            <person name="Stern D."/>
            <person name="Umen J."/>
            <person name="Willows R."/>
            <person name="Wilson N."/>
            <person name="Zimmer S.L."/>
            <person name="Allmer J."/>
            <person name="Balk J."/>
            <person name="Bisova K."/>
            <person name="Chen C.J."/>
            <person name="Elias M."/>
            <person name="Gendler K."/>
            <person name="Hauser C."/>
            <person name="Lamb M.R."/>
            <person name="Ledford H."/>
            <person name="Long J.C."/>
            <person name="Minagawa J."/>
            <person name="Page M.D."/>
            <person name="Pan J."/>
            <person name="Pootakham W."/>
            <person name="Roje S."/>
            <person name="Rose A."/>
            <person name="Stahlberg E."/>
            <person name="Terauchi A.M."/>
            <person name="Yang P."/>
            <person name="Ball S."/>
            <person name="Bowler C."/>
            <person name="Dieckmann C.L."/>
            <person name="Gladyshev V.N."/>
            <person name="Green P."/>
            <person name="Jorgensen R."/>
            <person name="Mayfield S."/>
            <person name="Mueller-Roeber B."/>
            <person name="Rajamani S."/>
            <person name="Sayre R.T."/>
            <person name="Brokstein P."/>
            <person name="Dubchak I."/>
            <person name="Goodstein D."/>
            <person name="Hornick L."/>
            <person name="Huang Y.W."/>
            <person name="Jhaveri J."/>
            <person name="Luo Y."/>
            <person name="Martinez D."/>
            <person name="Ngau W.C."/>
            <person name="Otillar B."/>
            <person name="Poliakov A."/>
            <person name="Porter A."/>
            <person name="Szajkowski L."/>
            <person name="Werner G."/>
            <person name="Zhou K."/>
            <person name="Grigoriev I.V."/>
            <person name="Rokhsar D.S."/>
            <person name="Grossman A.R."/>
        </authorList>
    </citation>
    <scope>NUCLEOTIDE SEQUENCE [LARGE SCALE GENOMIC DNA]</scope>
    <source>
        <strain>CC-503</strain>
    </source>
</reference>
<reference key="2">
    <citation type="journal article" date="2005" name="J. Cell Biol.">
        <title>Proteomic analysis of a eukaryotic cilium.</title>
        <authorList>
            <person name="Pazour G.J."/>
            <person name="Agrin N."/>
            <person name="Leszyk J."/>
            <person name="Witman G.B."/>
        </authorList>
    </citation>
    <scope>IDENTIFICATION BY MASS SPECTROMETRY</scope>
    <scope>SUBCELLULAR LOCATION</scope>
</reference>
<dbReference type="EMBL" id="DS496121">
    <property type="protein sequence ID" value="EDP04486.1"/>
    <property type="molecule type" value="Genomic_DNA"/>
</dbReference>
<dbReference type="RefSeq" id="XP_001691996.1">
    <property type="nucleotide sequence ID" value="XM_001691944.1"/>
</dbReference>
<dbReference type="PDB" id="6U42">
    <property type="method" value="EM"/>
    <property type="resolution" value="3.40 A"/>
    <property type="chains" value="4L/4M=1-482"/>
</dbReference>
<dbReference type="PDB" id="8GLV">
    <property type="method" value="EM"/>
    <property type="resolution" value="3.10 A"/>
    <property type="chains" value="Gb/Ny/OL/ON=1-482"/>
</dbReference>
<dbReference type="PDBsum" id="6U42"/>
<dbReference type="PDBsum" id="8GLV"/>
<dbReference type="EMDB" id="EMD-20631"/>
<dbReference type="EMDB" id="EMD-40220"/>
<dbReference type="SMR" id="A8IRJ7"/>
<dbReference type="PaxDb" id="3055-EDP04486"/>
<dbReference type="EnsemblPlants" id="PNW85409">
    <property type="protein sequence ID" value="PNW85409"/>
    <property type="gene ID" value="CHLRE_03g185050v5"/>
</dbReference>
<dbReference type="GeneID" id="5717436"/>
<dbReference type="Gramene" id="PNW85409">
    <property type="protein sequence ID" value="PNW85409"/>
    <property type="gene ID" value="CHLRE_03g185050v5"/>
</dbReference>
<dbReference type="KEGG" id="cre:CHLRE_03g185050v5"/>
<dbReference type="eggNOG" id="ENOG502R2FD">
    <property type="taxonomic scope" value="Eukaryota"/>
</dbReference>
<dbReference type="HOGENOM" id="CLU_561916_0_0_1"/>
<dbReference type="OMA" id="ANMQYTK"/>
<dbReference type="OrthoDB" id="536142at2759"/>
<dbReference type="GO" id="GO:0031514">
    <property type="term" value="C:motile cilium"/>
    <property type="evidence" value="ECO:0007669"/>
    <property type="project" value="UniProtKB-SubCell"/>
</dbReference>
<dbReference type="GO" id="GO:0003341">
    <property type="term" value="P:cilium movement"/>
    <property type="evidence" value="ECO:0000250"/>
    <property type="project" value="UniProtKB"/>
</dbReference>
<dbReference type="InterPro" id="IPR043596">
    <property type="entry name" value="CFAP53/TCHP"/>
</dbReference>
<dbReference type="InterPro" id="IPR043597">
    <property type="entry name" value="TPH_dom"/>
</dbReference>
<dbReference type="PANTHER" id="PTHR31183:SF1">
    <property type="entry name" value="CILIA- AND FLAGELLA-ASSOCIATED PROTEIN 53"/>
    <property type="match status" value="1"/>
</dbReference>
<dbReference type="PANTHER" id="PTHR31183">
    <property type="entry name" value="TRICHOPLEIN KERATIN FILAMENT-BINDING PROTEIN FAMILY MEMBER"/>
    <property type="match status" value="1"/>
</dbReference>
<dbReference type="Pfam" id="PF13868">
    <property type="entry name" value="TPH"/>
    <property type="match status" value="1"/>
</dbReference>
<proteinExistence type="evidence at protein level"/>
<feature type="chain" id="PRO_0000431313" description="Cilia- and flagella-associated protein 53">
    <location>
        <begin position="1"/>
        <end position="482"/>
    </location>
</feature>
<feature type="region of interest" description="Disordered" evidence="3">
    <location>
        <begin position="462"/>
        <end position="482"/>
    </location>
</feature>
<feature type="coiled-coil region" evidence="2">
    <location>
        <begin position="9"/>
        <end position="40"/>
    </location>
</feature>
<feature type="coiled-coil region" evidence="2">
    <location>
        <begin position="67"/>
        <end position="124"/>
    </location>
</feature>
<feature type="coiled-coil region" evidence="2">
    <location>
        <begin position="152"/>
        <end position="413"/>
    </location>
</feature>
<keyword id="KW-0002">3D-structure</keyword>
<keyword id="KW-0966">Cell projection</keyword>
<keyword id="KW-0969">Cilium</keyword>
<keyword id="KW-0175">Coiled coil</keyword>
<keyword id="KW-0282">Flagellum</keyword>
<sequence>MNKSRAPPDARIQKMRELEERLANLKADRKVEQKMVAVAEFEARTTKKIVGNLVQQRYDALKARAEADLNARRQRLADKLDAEDLAMRQELLASKKTPEQRRAELAERARALAATREAERQALASTLYEKAFIQSCDVLRDENSKRILYRTIEERNAQIEHKMAQRIMEAEEKRMWHEMSEVERQKMEQRYLDDKRRDREKREEVLRILDEQVRQVNARRAEASMLRRAEIAELNATWRQMAADQEAADVQERENMKKLAAELQEFNRIKQMEISEAERSERELDLKILQEALSKEAADEAAELAFRERRREEMRRYREQLALMMEKEREETAERDALILKAQLEQEAKRDAELAARDEARRQLMAQVDAIRQIQIQEKLAKRLERAEEKAFERAQMAEEVAKAESDAAAKDAADRKAGIQRRLELQTMMVAKAHMKAAELDEKLAEGEATKRVEDQFKAKVNQTLSSTDPPVWHGRRKFDW</sequence>
<name>CFA53_CHLRE</name>
<accession>A8IRJ7</accession>
<gene>
    <name evidence="5" type="primary">CFAP53</name>
    <name evidence="6" type="synonym">FAP53</name>
    <name evidence="6" type="ORF">CHLREDRAFT_196792</name>
</gene>